<reference evidence="5" key="1">
    <citation type="journal article" date="2003" name="Genome Biol.">
        <title>Odorant receptor expressed sequence tags demonstrate olfactory expression of over 400 genes, extensive alternate splicing and unequal expression levels.</title>
        <authorList>
            <person name="Young J.M."/>
            <person name="Shykind B.M."/>
            <person name="Lane R.P."/>
            <person name="Tonnes-Priddy L."/>
            <person name="Ross J.A."/>
            <person name="Walker M."/>
            <person name="Williams E.M."/>
            <person name="Trask B.J."/>
        </authorList>
    </citation>
    <scope>NUCLEOTIDE SEQUENCE [GENOMIC DNA]</scope>
</reference>
<sequence>MEIENHTLITKFLILGLSDDPELQPILFGLFLSMYLVTLLGNLLIILAVSSDSHLHKPMYFLLSNLSFIDICFISTTIPKMLVNMQSQIKDISYIECLTQVFFFNIFAGMDNFLLTLMAYDRFVAICHPLNYTVIMNPRLCALLILMFWIIMFWVSLIHVLLMNELNFSRGTEIPHFFCELAQVLKVSNSDNHVNNVFMYVVTSLLGVIPMTGILMSYSQIFSSLFRMSSTVSKYKAFSTCGSHLCVVTLFYGSGFGVYFSSSVVHSTQRRKVASLMYTVISPMLNPFIYTLRNKDVKGALGKLFNRVASSPSCINDIRNKLLLRSVRQIL</sequence>
<evidence type="ECO:0000255" key="1"/>
<evidence type="ECO:0000255" key="2">
    <source>
        <dbReference type="PROSITE-ProRule" id="PRU00521"/>
    </source>
</evidence>
<evidence type="ECO:0000269" key="3">
    <source>
    </source>
</evidence>
<evidence type="ECO:0000305" key="4"/>
<evidence type="ECO:0000312" key="5">
    <source>
        <dbReference type="EMBL" id="AAP71342.1"/>
    </source>
</evidence>
<evidence type="ECO:0000312" key="6">
    <source>
        <dbReference type="MGI" id="MGI:3030701"/>
    </source>
</evidence>
<protein>
    <recommendedName>
        <fullName evidence="4">Olfactory receptor 7D11</fullName>
    </recommendedName>
    <alternativeName>
        <fullName evidence="6">Olfactory receptor 867</fullName>
    </alternativeName>
</protein>
<organism>
    <name type="scientific">Mus musculus</name>
    <name type="common">Mouse</name>
    <dbReference type="NCBI Taxonomy" id="10090"/>
    <lineage>
        <taxon>Eukaryota</taxon>
        <taxon>Metazoa</taxon>
        <taxon>Chordata</taxon>
        <taxon>Craniata</taxon>
        <taxon>Vertebrata</taxon>
        <taxon>Euteleostomi</taxon>
        <taxon>Mammalia</taxon>
        <taxon>Eutheria</taxon>
        <taxon>Euarchontoglires</taxon>
        <taxon>Glires</taxon>
        <taxon>Rodentia</taxon>
        <taxon>Myomorpha</taxon>
        <taxon>Muroidea</taxon>
        <taxon>Muridae</taxon>
        <taxon>Murinae</taxon>
        <taxon>Mus</taxon>
        <taxon>Mus</taxon>
    </lineage>
</organism>
<gene>
    <name evidence="6" type="primary">Or7d11</name>
    <name evidence="5 6" type="synonym">Olfr867</name>
</gene>
<accession>Q7TRF3</accession>
<feature type="chain" id="PRO_0000280220" description="Olfactory receptor 7D11">
    <location>
        <begin position="1"/>
        <end position="331"/>
    </location>
</feature>
<feature type="topological domain" description="Extracellular" evidence="1">
    <location>
        <begin position="1"/>
        <end position="25"/>
    </location>
</feature>
<feature type="transmembrane region" description="Helical; Name=1" evidence="1">
    <location>
        <begin position="26"/>
        <end position="46"/>
    </location>
</feature>
<feature type="topological domain" description="Cytoplasmic" evidence="1">
    <location>
        <begin position="47"/>
        <end position="57"/>
    </location>
</feature>
<feature type="transmembrane region" description="Helical; Name=2" evidence="1">
    <location>
        <begin position="58"/>
        <end position="78"/>
    </location>
</feature>
<feature type="topological domain" description="Extracellular" evidence="1">
    <location>
        <begin position="79"/>
        <end position="97"/>
    </location>
</feature>
<feature type="transmembrane region" description="Helical; Name=3" evidence="1">
    <location>
        <begin position="98"/>
        <end position="118"/>
    </location>
</feature>
<feature type="topological domain" description="Cytoplasmic" evidence="1">
    <location>
        <begin position="119"/>
        <end position="142"/>
    </location>
</feature>
<feature type="transmembrane region" description="Helical; Name=4" evidence="1">
    <location>
        <begin position="143"/>
        <end position="163"/>
    </location>
</feature>
<feature type="topological domain" description="Extracellular" evidence="1">
    <location>
        <begin position="164"/>
        <end position="196"/>
    </location>
</feature>
<feature type="transmembrane region" description="Helical; Name=5" evidence="1">
    <location>
        <begin position="197"/>
        <end position="217"/>
    </location>
</feature>
<feature type="topological domain" description="Cytoplasmic" evidence="1">
    <location>
        <begin position="218"/>
        <end position="244"/>
    </location>
</feature>
<feature type="transmembrane region" description="Helical; Name=6" evidence="1">
    <location>
        <begin position="245"/>
        <end position="265"/>
    </location>
</feature>
<feature type="topological domain" description="Extracellular" evidence="1">
    <location>
        <begin position="266"/>
        <end position="271"/>
    </location>
</feature>
<feature type="transmembrane region" description="Helical; Name=7" evidence="1">
    <location>
        <begin position="272"/>
        <end position="292"/>
    </location>
</feature>
<feature type="topological domain" description="Cytoplasmic" evidence="1">
    <location>
        <begin position="293"/>
        <end position="331"/>
    </location>
</feature>
<feature type="glycosylation site" description="N-linked (GlcNAc...) asparagine" evidence="1">
    <location>
        <position position="5"/>
    </location>
</feature>
<feature type="glycosylation site" description="N-linked (GlcNAc...) asparagine" evidence="1">
    <location>
        <position position="167"/>
    </location>
</feature>
<feature type="disulfide bond" evidence="2">
    <location>
        <begin position="97"/>
        <end position="179"/>
    </location>
</feature>
<keyword id="KW-1003">Cell membrane</keyword>
<keyword id="KW-1015">Disulfide bond</keyword>
<keyword id="KW-0297">G-protein coupled receptor</keyword>
<keyword id="KW-0325">Glycoprotein</keyword>
<keyword id="KW-0472">Membrane</keyword>
<keyword id="KW-0552">Olfaction</keyword>
<keyword id="KW-0675">Receptor</keyword>
<keyword id="KW-1185">Reference proteome</keyword>
<keyword id="KW-0716">Sensory transduction</keyword>
<keyword id="KW-0807">Transducer</keyword>
<keyword id="KW-0812">Transmembrane</keyword>
<keyword id="KW-1133">Transmembrane helix</keyword>
<comment type="function">
    <text evidence="3">Possible olfactory or taste receptor.</text>
</comment>
<comment type="subcellular location">
    <subcellularLocation>
        <location evidence="4">Cell membrane</location>
        <topology evidence="1">Multi-pass membrane protein</topology>
    </subcellularLocation>
</comment>
<comment type="similarity">
    <text evidence="2">Belongs to the G-protein coupled receptor 1 family.</text>
</comment>
<proteinExistence type="inferred from homology"/>
<name>O7D11_MOUSE</name>
<dbReference type="EMBL" id="AY318045">
    <property type="protein sequence ID" value="AAP71342.1"/>
    <property type="molecule type" value="Genomic_DNA"/>
</dbReference>
<dbReference type="CCDS" id="CCDS22869.1"/>
<dbReference type="RefSeq" id="NP_001011748.1">
    <property type="nucleotide sequence ID" value="NM_001011748.1"/>
</dbReference>
<dbReference type="SMR" id="Q7TRF3"/>
<dbReference type="FunCoup" id="Q7TRF3">
    <property type="interactions" value="1133"/>
</dbReference>
<dbReference type="STRING" id="10090.ENSMUSP00000150378"/>
<dbReference type="GlyCosmos" id="Q7TRF3">
    <property type="glycosylation" value="2 sites, No reported glycans"/>
</dbReference>
<dbReference type="GlyGen" id="Q7TRF3">
    <property type="glycosylation" value="2 sites"/>
</dbReference>
<dbReference type="PaxDb" id="10090-ENSMUSP00000057469"/>
<dbReference type="ProteomicsDB" id="294188"/>
<dbReference type="DNASU" id="257898"/>
<dbReference type="Ensembl" id="ENSMUST00000060780.3">
    <property type="protein sequence ID" value="ENSMUSP00000057469.3"/>
    <property type="gene ID" value="ENSMUSG00000044454.6"/>
</dbReference>
<dbReference type="Ensembl" id="ENSMUST00000216538.2">
    <property type="protein sequence ID" value="ENSMUSP00000150378.2"/>
    <property type="gene ID" value="ENSMUSG00000044454.6"/>
</dbReference>
<dbReference type="GeneID" id="257898"/>
<dbReference type="KEGG" id="mmu:257898"/>
<dbReference type="UCSC" id="uc009oia.1">
    <property type="organism name" value="mouse"/>
</dbReference>
<dbReference type="AGR" id="MGI:3030701"/>
<dbReference type="CTD" id="257898"/>
<dbReference type="MGI" id="MGI:3030701">
    <property type="gene designation" value="Or7d11"/>
</dbReference>
<dbReference type="VEuPathDB" id="HostDB:ENSMUSG00000044454"/>
<dbReference type="eggNOG" id="ENOG502QVH7">
    <property type="taxonomic scope" value="Eukaryota"/>
</dbReference>
<dbReference type="GeneTree" id="ENSGT00940000153686"/>
<dbReference type="HOGENOM" id="CLU_012526_1_0_1"/>
<dbReference type="InParanoid" id="Q7TRF3"/>
<dbReference type="OMA" id="LMMQISF"/>
<dbReference type="OrthoDB" id="9444602at2759"/>
<dbReference type="PhylomeDB" id="Q7TRF3"/>
<dbReference type="TreeFam" id="TF337210"/>
<dbReference type="BioGRID-ORCS" id="257898">
    <property type="hits" value="1 hit in 71 CRISPR screens"/>
</dbReference>
<dbReference type="PRO" id="PR:Q7TRF3"/>
<dbReference type="Proteomes" id="UP000000589">
    <property type="component" value="Chromosome 9"/>
</dbReference>
<dbReference type="RNAct" id="Q7TRF3">
    <property type="molecule type" value="protein"/>
</dbReference>
<dbReference type="Bgee" id="ENSMUSG00000044454">
    <property type="expression patterns" value="Expressed in respiratory tract epithelium and 3 other cell types or tissues"/>
</dbReference>
<dbReference type="ExpressionAtlas" id="Q7TRF3">
    <property type="expression patterns" value="baseline and differential"/>
</dbReference>
<dbReference type="GO" id="GO:0016020">
    <property type="term" value="C:membrane"/>
    <property type="evidence" value="ECO:0000247"/>
    <property type="project" value="MGI"/>
</dbReference>
<dbReference type="GO" id="GO:0005886">
    <property type="term" value="C:plasma membrane"/>
    <property type="evidence" value="ECO:0007669"/>
    <property type="project" value="UniProtKB-SubCell"/>
</dbReference>
<dbReference type="GO" id="GO:0004930">
    <property type="term" value="F:G protein-coupled receptor activity"/>
    <property type="evidence" value="ECO:0007669"/>
    <property type="project" value="UniProtKB-KW"/>
</dbReference>
<dbReference type="GO" id="GO:0004984">
    <property type="term" value="F:olfactory receptor activity"/>
    <property type="evidence" value="ECO:0000247"/>
    <property type="project" value="MGI"/>
</dbReference>
<dbReference type="GO" id="GO:0007186">
    <property type="term" value="P:G protein-coupled receptor signaling pathway"/>
    <property type="evidence" value="ECO:0000247"/>
    <property type="project" value="MGI"/>
</dbReference>
<dbReference type="GO" id="GO:0007608">
    <property type="term" value="P:sensory perception of smell"/>
    <property type="evidence" value="ECO:0000247"/>
    <property type="project" value="MGI"/>
</dbReference>
<dbReference type="CDD" id="cd15234">
    <property type="entry name" value="7tmA_OR7-like"/>
    <property type="match status" value="1"/>
</dbReference>
<dbReference type="FunFam" id="1.20.1070.10:FF:000009">
    <property type="entry name" value="Olfactory receptor"/>
    <property type="match status" value="1"/>
</dbReference>
<dbReference type="Gene3D" id="1.20.1070.10">
    <property type="entry name" value="Rhodopsin 7-helix transmembrane proteins"/>
    <property type="match status" value="1"/>
</dbReference>
<dbReference type="InterPro" id="IPR000276">
    <property type="entry name" value="GPCR_Rhodpsn"/>
</dbReference>
<dbReference type="InterPro" id="IPR017452">
    <property type="entry name" value="GPCR_Rhodpsn_7TM"/>
</dbReference>
<dbReference type="InterPro" id="IPR000725">
    <property type="entry name" value="Olfact_rcpt"/>
</dbReference>
<dbReference type="PANTHER" id="PTHR48001">
    <property type="entry name" value="OLFACTORY RECEPTOR"/>
    <property type="match status" value="1"/>
</dbReference>
<dbReference type="Pfam" id="PF13853">
    <property type="entry name" value="7tm_4"/>
    <property type="match status" value="1"/>
</dbReference>
<dbReference type="PRINTS" id="PR00237">
    <property type="entry name" value="GPCRRHODOPSN"/>
</dbReference>
<dbReference type="PRINTS" id="PR00245">
    <property type="entry name" value="OLFACTORYR"/>
</dbReference>
<dbReference type="SUPFAM" id="SSF81321">
    <property type="entry name" value="Family A G protein-coupled receptor-like"/>
    <property type="match status" value="1"/>
</dbReference>
<dbReference type="PROSITE" id="PS00237">
    <property type="entry name" value="G_PROTEIN_RECEP_F1_1"/>
    <property type="match status" value="1"/>
</dbReference>
<dbReference type="PROSITE" id="PS50262">
    <property type="entry name" value="G_PROTEIN_RECEP_F1_2"/>
    <property type="match status" value="1"/>
</dbReference>